<dbReference type="EMBL" id="AL035539">
    <property type="protein sequence ID" value="CAB37481.1"/>
    <property type="molecule type" value="Genomic_DNA"/>
</dbReference>
<dbReference type="EMBL" id="AL161593">
    <property type="protein sequence ID" value="CAB80490.1"/>
    <property type="molecule type" value="Genomic_DNA"/>
</dbReference>
<dbReference type="EMBL" id="CP002687">
    <property type="protein sequence ID" value="AEE86905.1"/>
    <property type="molecule type" value="Genomic_DNA"/>
</dbReference>
<dbReference type="EMBL" id="AY050451">
    <property type="protein sequence ID" value="AAK91466.1"/>
    <property type="molecule type" value="mRNA"/>
</dbReference>
<dbReference type="EMBL" id="AY133541">
    <property type="protein sequence ID" value="AAM91371.1"/>
    <property type="molecule type" value="mRNA"/>
</dbReference>
<dbReference type="EMBL" id="AY087791">
    <property type="protein sequence ID" value="AAM65327.1"/>
    <property type="molecule type" value="mRNA"/>
</dbReference>
<dbReference type="PIR" id="T05653">
    <property type="entry name" value="T05653"/>
</dbReference>
<dbReference type="RefSeq" id="NP_195538.1">
    <property type="nucleotide sequence ID" value="NM_119987.3"/>
</dbReference>
<dbReference type="SMR" id="Q9SVG0"/>
<dbReference type="FunCoup" id="Q9SVG0">
    <property type="interactions" value="1018"/>
</dbReference>
<dbReference type="IntAct" id="Q9SVG0">
    <property type="interactions" value="4"/>
</dbReference>
<dbReference type="STRING" id="3702.Q9SVG0"/>
<dbReference type="iPTMnet" id="Q9SVG0"/>
<dbReference type="PaxDb" id="3702-AT4G38250.1"/>
<dbReference type="ProteomicsDB" id="241019"/>
<dbReference type="EnsemblPlants" id="AT4G38250.1">
    <property type="protein sequence ID" value="AT4G38250.1"/>
    <property type="gene ID" value="AT4G38250"/>
</dbReference>
<dbReference type="GeneID" id="829982"/>
<dbReference type="Gramene" id="AT4G38250.1">
    <property type="protein sequence ID" value="AT4G38250.1"/>
    <property type="gene ID" value="AT4G38250"/>
</dbReference>
<dbReference type="KEGG" id="ath:AT4G38250"/>
<dbReference type="Araport" id="AT4G38250"/>
<dbReference type="TAIR" id="AT4G38250">
    <property type="gene designation" value="AT4G38250"/>
</dbReference>
<dbReference type="eggNOG" id="KOG1304">
    <property type="taxonomic scope" value="Eukaryota"/>
</dbReference>
<dbReference type="HOGENOM" id="CLU_009646_6_0_1"/>
<dbReference type="InParanoid" id="Q9SVG0"/>
<dbReference type="OMA" id="RTGTSFC"/>
<dbReference type="OrthoDB" id="655540at2759"/>
<dbReference type="PhylomeDB" id="Q9SVG0"/>
<dbReference type="PRO" id="PR:Q9SVG0"/>
<dbReference type="Proteomes" id="UP000006548">
    <property type="component" value="Chromosome 4"/>
</dbReference>
<dbReference type="ExpressionAtlas" id="Q9SVG0">
    <property type="expression patterns" value="baseline and differential"/>
</dbReference>
<dbReference type="GO" id="GO:0005774">
    <property type="term" value="C:vacuolar membrane"/>
    <property type="evidence" value="ECO:0000314"/>
    <property type="project" value="UniProtKB"/>
</dbReference>
<dbReference type="GO" id="GO:0015175">
    <property type="term" value="F:neutral L-amino acid transmembrane transporter activity"/>
    <property type="evidence" value="ECO:0000314"/>
    <property type="project" value="UniProtKB"/>
</dbReference>
<dbReference type="GO" id="GO:0015804">
    <property type="term" value="P:neutral amino acid transport"/>
    <property type="evidence" value="ECO:0000314"/>
    <property type="project" value="UniProtKB"/>
</dbReference>
<dbReference type="InterPro" id="IPR013057">
    <property type="entry name" value="AA_transpt_TM"/>
</dbReference>
<dbReference type="PANTHER" id="PTHR22950">
    <property type="entry name" value="AMINO ACID TRANSPORTER"/>
    <property type="match status" value="1"/>
</dbReference>
<dbReference type="PANTHER" id="PTHR22950:SF635">
    <property type="entry name" value="AMINO ACID TRANSPORTER AVT3C"/>
    <property type="match status" value="1"/>
</dbReference>
<dbReference type="Pfam" id="PF01490">
    <property type="entry name" value="Aa_trans"/>
    <property type="match status" value="1"/>
</dbReference>
<protein>
    <recommendedName>
        <fullName evidence="5">Amino acid transporter AVT3C</fullName>
        <shortName evidence="4">AtAvt3C</shortName>
    </recommendedName>
    <alternativeName>
        <fullName evidence="5">Aromatic and neutral amino acid transporter-like protein 2</fullName>
    </alternativeName>
</protein>
<accession>Q9SVG0</accession>
<accession>Q8LAI4</accession>
<feature type="chain" id="PRO_0000433107" description="Amino acid transporter AVT3C">
    <location>
        <begin position="1"/>
        <end position="436"/>
    </location>
</feature>
<feature type="topological domain" description="Cytoplasmic" evidence="5">
    <location>
        <begin position="1"/>
        <end position="38"/>
    </location>
</feature>
<feature type="transmembrane region" description="Helical; Name=1" evidence="1">
    <location>
        <begin position="39"/>
        <end position="59"/>
    </location>
</feature>
<feature type="topological domain" description="Vacuolar" evidence="5">
    <location>
        <begin position="60"/>
        <end position="65"/>
    </location>
</feature>
<feature type="transmembrane region" description="Helical; Name=2" evidence="1">
    <location>
        <begin position="66"/>
        <end position="86"/>
    </location>
</feature>
<feature type="topological domain" description="Cytoplasmic" evidence="5">
    <location>
        <begin position="87"/>
        <end position="118"/>
    </location>
</feature>
<feature type="transmembrane region" description="Helical; Name=3" evidence="1">
    <location>
        <begin position="119"/>
        <end position="139"/>
    </location>
</feature>
<feature type="topological domain" description="Vacuolar" evidence="5">
    <location>
        <begin position="140"/>
        <end position="166"/>
    </location>
</feature>
<feature type="transmembrane region" description="Helical; Name=4" evidence="1">
    <location>
        <begin position="167"/>
        <end position="187"/>
    </location>
</feature>
<feature type="topological domain" description="Cytoplasmic" evidence="5">
    <location>
        <begin position="188"/>
        <end position="195"/>
    </location>
</feature>
<feature type="transmembrane region" description="Helical; Name=5" evidence="1">
    <location>
        <begin position="196"/>
        <end position="216"/>
    </location>
</feature>
<feature type="topological domain" description="Vacuolar" evidence="5">
    <location>
        <begin position="217"/>
        <end position="228"/>
    </location>
</feature>
<feature type="transmembrane region" description="Helical; Name=6" evidence="1">
    <location>
        <begin position="229"/>
        <end position="249"/>
    </location>
</feature>
<feature type="topological domain" description="Cytoplasmic" evidence="5">
    <location>
        <begin position="250"/>
        <end position="273"/>
    </location>
</feature>
<feature type="transmembrane region" description="Helical; Name=7" evidence="1">
    <location>
        <begin position="274"/>
        <end position="294"/>
    </location>
</feature>
<feature type="topological domain" description="Vacuolar" evidence="5">
    <location>
        <begin position="295"/>
        <end position="309"/>
    </location>
</feature>
<feature type="transmembrane region" description="Helical; Name=8" evidence="1">
    <location>
        <begin position="310"/>
        <end position="330"/>
    </location>
</feature>
<feature type="topological domain" description="Cytoplasmic" evidence="5">
    <location>
        <begin position="331"/>
        <end position="352"/>
    </location>
</feature>
<feature type="transmembrane region" description="Helical; Name=9" evidence="1">
    <location>
        <begin position="353"/>
        <end position="373"/>
    </location>
</feature>
<feature type="topological domain" description="Vacuolar" evidence="5">
    <location>
        <begin position="374"/>
        <end position="376"/>
    </location>
</feature>
<feature type="transmembrane region" description="Helical; Name=10" evidence="1">
    <location>
        <begin position="377"/>
        <end position="397"/>
    </location>
</feature>
<feature type="topological domain" description="Cytoplasmic" evidence="5">
    <location>
        <begin position="398"/>
        <end position="411"/>
    </location>
</feature>
<feature type="transmembrane region" description="Helical; Name=11" evidence="1">
    <location>
        <begin position="412"/>
        <end position="432"/>
    </location>
</feature>
<feature type="topological domain" description="Vacuolar" evidence="5">
    <location>
        <begin position="433"/>
        <end position="436"/>
    </location>
</feature>
<feature type="region of interest" description="Disordered" evidence="2">
    <location>
        <begin position="1"/>
        <end position="21"/>
    </location>
</feature>
<feature type="compositionally biased region" description="Polar residues" evidence="2">
    <location>
        <begin position="1"/>
        <end position="13"/>
    </location>
</feature>
<feature type="sequence conflict" description="In Ref. 4; AAM65327." evidence="5" ref="4">
    <original>S</original>
    <variation>T</variation>
    <location>
        <position position="24"/>
    </location>
</feature>
<sequence>MGFQNEASSSSYTLKIPPPAREDSPLLGKGPPLSSQFKTFANVFIAVVGAGVLGLPYAFKRTGWLMGVLLLVSVSVLTHHCMMLLVYTRRKLDSFNAGISKIGSFGDLGFAVCGSLGRIVVDLFIILSQAGFCVGYLIFIGTTLANLSDPESPTSLRHQFTRLGSEFLGVSSKSLYIWGCFPFQLGLNSIKTLTHLAPLSIFADIVDLGAMAVVIVEDSMIILKQRPDVVAFGGMSLFLYGMGVAVYSFEGVGMVLPLESEMKDKDKFGKVLALGMGFISLIYIAFGILGYLAFGEDTMDIITANLGAGLVSTVVQLGLCINLFFTFPLMMNPVFEIVERRFSRGMYSAWLRWVLVLAVTLVALFVPNFADFLSLVGSSTCCVLGFVLPALFHLLVFKEEMGWLQWSSDTAIVVLGVVLAVSGTWSSLSEIFSVKV</sequence>
<reference key="1">
    <citation type="journal article" date="1999" name="Nature">
        <title>Sequence and analysis of chromosome 4 of the plant Arabidopsis thaliana.</title>
        <authorList>
            <person name="Mayer K.F.X."/>
            <person name="Schueller C."/>
            <person name="Wambutt R."/>
            <person name="Murphy G."/>
            <person name="Volckaert G."/>
            <person name="Pohl T."/>
            <person name="Duesterhoeft A."/>
            <person name="Stiekema W."/>
            <person name="Entian K.-D."/>
            <person name="Terryn N."/>
            <person name="Harris B."/>
            <person name="Ansorge W."/>
            <person name="Brandt P."/>
            <person name="Grivell L.A."/>
            <person name="Rieger M."/>
            <person name="Weichselgartner M."/>
            <person name="de Simone V."/>
            <person name="Obermaier B."/>
            <person name="Mache R."/>
            <person name="Mueller M."/>
            <person name="Kreis M."/>
            <person name="Delseny M."/>
            <person name="Puigdomenech P."/>
            <person name="Watson M."/>
            <person name="Schmidtheini T."/>
            <person name="Reichert B."/>
            <person name="Portetelle D."/>
            <person name="Perez-Alonso M."/>
            <person name="Boutry M."/>
            <person name="Bancroft I."/>
            <person name="Vos P."/>
            <person name="Hoheisel J."/>
            <person name="Zimmermann W."/>
            <person name="Wedler H."/>
            <person name="Ridley P."/>
            <person name="Langham S.-A."/>
            <person name="McCullagh B."/>
            <person name="Bilham L."/>
            <person name="Robben J."/>
            <person name="van der Schueren J."/>
            <person name="Grymonprez B."/>
            <person name="Chuang Y.-J."/>
            <person name="Vandenbussche F."/>
            <person name="Braeken M."/>
            <person name="Weltjens I."/>
            <person name="Voet M."/>
            <person name="Bastiaens I."/>
            <person name="Aert R."/>
            <person name="Defoor E."/>
            <person name="Weitzenegger T."/>
            <person name="Bothe G."/>
            <person name="Ramsperger U."/>
            <person name="Hilbert H."/>
            <person name="Braun M."/>
            <person name="Holzer E."/>
            <person name="Brandt A."/>
            <person name="Peters S."/>
            <person name="van Staveren M."/>
            <person name="Dirkse W."/>
            <person name="Mooijman P."/>
            <person name="Klein Lankhorst R."/>
            <person name="Rose M."/>
            <person name="Hauf J."/>
            <person name="Koetter P."/>
            <person name="Berneiser S."/>
            <person name="Hempel S."/>
            <person name="Feldpausch M."/>
            <person name="Lamberth S."/>
            <person name="Van den Daele H."/>
            <person name="De Keyser A."/>
            <person name="Buysshaert C."/>
            <person name="Gielen J."/>
            <person name="Villarroel R."/>
            <person name="De Clercq R."/>
            <person name="van Montagu M."/>
            <person name="Rogers J."/>
            <person name="Cronin A."/>
            <person name="Quail M.A."/>
            <person name="Bray-Allen S."/>
            <person name="Clark L."/>
            <person name="Doggett J."/>
            <person name="Hall S."/>
            <person name="Kay M."/>
            <person name="Lennard N."/>
            <person name="McLay K."/>
            <person name="Mayes R."/>
            <person name="Pettett A."/>
            <person name="Rajandream M.A."/>
            <person name="Lyne M."/>
            <person name="Benes V."/>
            <person name="Rechmann S."/>
            <person name="Borkova D."/>
            <person name="Bloecker H."/>
            <person name="Scharfe M."/>
            <person name="Grimm M."/>
            <person name="Loehnert T.-H."/>
            <person name="Dose S."/>
            <person name="de Haan M."/>
            <person name="Maarse A.C."/>
            <person name="Schaefer M."/>
            <person name="Mueller-Auer S."/>
            <person name="Gabel C."/>
            <person name="Fuchs M."/>
            <person name="Fartmann B."/>
            <person name="Granderath K."/>
            <person name="Dauner D."/>
            <person name="Herzl A."/>
            <person name="Neumann S."/>
            <person name="Argiriou A."/>
            <person name="Vitale D."/>
            <person name="Liguori R."/>
            <person name="Piravandi E."/>
            <person name="Massenet O."/>
            <person name="Quigley F."/>
            <person name="Clabauld G."/>
            <person name="Muendlein A."/>
            <person name="Felber R."/>
            <person name="Schnabl S."/>
            <person name="Hiller R."/>
            <person name="Schmidt W."/>
            <person name="Lecharny A."/>
            <person name="Aubourg S."/>
            <person name="Chefdor F."/>
            <person name="Cooke R."/>
            <person name="Berger C."/>
            <person name="Monfort A."/>
            <person name="Casacuberta E."/>
            <person name="Gibbons T."/>
            <person name="Weber N."/>
            <person name="Vandenbol M."/>
            <person name="Bargues M."/>
            <person name="Terol J."/>
            <person name="Torres A."/>
            <person name="Perez-Perez A."/>
            <person name="Purnelle B."/>
            <person name="Bent E."/>
            <person name="Johnson S."/>
            <person name="Tacon D."/>
            <person name="Jesse T."/>
            <person name="Heijnen L."/>
            <person name="Schwarz S."/>
            <person name="Scholler P."/>
            <person name="Heber S."/>
            <person name="Francs P."/>
            <person name="Bielke C."/>
            <person name="Frishman D."/>
            <person name="Haase D."/>
            <person name="Lemcke K."/>
            <person name="Mewes H.-W."/>
            <person name="Stocker S."/>
            <person name="Zaccaria P."/>
            <person name="Bevan M."/>
            <person name="Wilson R.K."/>
            <person name="de la Bastide M."/>
            <person name="Habermann K."/>
            <person name="Parnell L."/>
            <person name="Dedhia N."/>
            <person name="Gnoj L."/>
            <person name="Schutz K."/>
            <person name="Huang E."/>
            <person name="Spiegel L."/>
            <person name="Sekhon M."/>
            <person name="Murray J."/>
            <person name="Sheet P."/>
            <person name="Cordes M."/>
            <person name="Abu-Threideh J."/>
            <person name="Stoneking T."/>
            <person name="Kalicki J."/>
            <person name="Graves T."/>
            <person name="Harmon G."/>
            <person name="Edwards J."/>
            <person name="Latreille P."/>
            <person name="Courtney L."/>
            <person name="Cloud J."/>
            <person name="Abbott A."/>
            <person name="Scott K."/>
            <person name="Johnson D."/>
            <person name="Minx P."/>
            <person name="Bentley D."/>
            <person name="Fulton B."/>
            <person name="Miller N."/>
            <person name="Greco T."/>
            <person name="Kemp K."/>
            <person name="Kramer J."/>
            <person name="Fulton L."/>
            <person name="Mardis E."/>
            <person name="Dante M."/>
            <person name="Pepin K."/>
            <person name="Hillier L.W."/>
            <person name="Nelson J."/>
            <person name="Spieth J."/>
            <person name="Ryan E."/>
            <person name="Andrews S."/>
            <person name="Geisel C."/>
            <person name="Layman D."/>
            <person name="Du H."/>
            <person name="Ali J."/>
            <person name="Berghoff A."/>
            <person name="Jones K."/>
            <person name="Drone K."/>
            <person name="Cotton M."/>
            <person name="Joshu C."/>
            <person name="Antonoiu B."/>
            <person name="Zidanic M."/>
            <person name="Strong C."/>
            <person name="Sun H."/>
            <person name="Lamar B."/>
            <person name="Yordan C."/>
            <person name="Ma P."/>
            <person name="Zhong J."/>
            <person name="Preston R."/>
            <person name="Vil D."/>
            <person name="Shekher M."/>
            <person name="Matero A."/>
            <person name="Shah R."/>
            <person name="Swaby I.K."/>
            <person name="O'Shaughnessy A."/>
            <person name="Rodriguez M."/>
            <person name="Hoffman J."/>
            <person name="Till S."/>
            <person name="Granat S."/>
            <person name="Shohdy N."/>
            <person name="Hasegawa A."/>
            <person name="Hameed A."/>
            <person name="Lodhi M."/>
            <person name="Johnson A."/>
            <person name="Chen E."/>
            <person name="Marra M.A."/>
            <person name="Martienssen R."/>
            <person name="McCombie W.R."/>
        </authorList>
    </citation>
    <scope>NUCLEOTIDE SEQUENCE [LARGE SCALE GENOMIC DNA]</scope>
    <source>
        <strain>cv. Columbia</strain>
    </source>
</reference>
<reference key="2">
    <citation type="journal article" date="2017" name="Plant J.">
        <title>Araport11: a complete reannotation of the Arabidopsis thaliana reference genome.</title>
        <authorList>
            <person name="Cheng C.Y."/>
            <person name="Krishnakumar V."/>
            <person name="Chan A.P."/>
            <person name="Thibaud-Nissen F."/>
            <person name="Schobel S."/>
            <person name="Town C.D."/>
        </authorList>
    </citation>
    <scope>GENOME REANNOTATION</scope>
    <source>
        <strain>cv. Columbia</strain>
    </source>
</reference>
<reference key="3">
    <citation type="journal article" date="2003" name="Science">
        <title>Empirical analysis of transcriptional activity in the Arabidopsis genome.</title>
        <authorList>
            <person name="Yamada K."/>
            <person name="Lim J."/>
            <person name="Dale J.M."/>
            <person name="Chen H."/>
            <person name="Shinn P."/>
            <person name="Palm C.J."/>
            <person name="Southwick A.M."/>
            <person name="Wu H.C."/>
            <person name="Kim C.J."/>
            <person name="Nguyen M."/>
            <person name="Pham P.K."/>
            <person name="Cheuk R.F."/>
            <person name="Karlin-Newmann G."/>
            <person name="Liu S.X."/>
            <person name="Lam B."/>
            <person name="Sakano H."/>
            <person name="Wu T."/>
            <person name="Yu G."/>
            <person name="Miranda M."/>
            <person name="Quach H.L."/>
            <person name="Tripp M."/>
            <person name="Chang C.H."/>
            <person name="Lee J.M."/>
            <person name="Toriumi M.J."/>
            <person name="Chan M.M."/>
            <person name="Tang C.C."/>
            <person name="Onodera C.S."/>
            <person name="Deng J.M."/>
            <person name="Akiyama K."/>
            <person name="Ansari Y."/>
            <person name="Arakawa T."/>
            <person name="Banh J."/>
            <person name="Banno F."/>
            <person name="Bowser L."/>
            <person name="Brooks S.Y."/>
            <person name="Carninci P."/>
            <person name="Chao Q."/>
            <person name="Choy N."/>
            <person name="Enju A."/>
            <person name="Goldsmith A.D."/>
            <person name="Gurjal M."/>
            <person name="Hansen N.F."/>
            <person name="Hayashizaki Y."/>
            <person name="Johnson-Hopson C."/>
            <person name="Hsuan V.W."/>
            <person name="Iida K."/>
            <person name="Karnes M."/>
            <person name="Khan S."/>
            <person name="Koesema E."/>
            <person name="Ishida J."/>
            <person name="Jiang P.X."/>
            <person name="Jones T."/>
            <person name="Kawai J."/>
            <person name="Kamiya A."/>
            <person name="Meyers C."/>
            <person name="Nakajima M."/>
            <person name="Narusaka M."/>
            <person name="Seki M."/>
            <person name="Sakurai T."/>
            <person name="Satou M."/>
            <person name="Tamse R."/>
            <person name="Vaysberg M."/>
            <person name="Wallender E.K."/>
            <person name="Wong C."/>
            <person name="Yamamura Y."/>
            <person name="Yuan S."/>
            <person name="Shinozaki K."/>
            <person name="Davis R.W."/>
            <person name="Theologis A."/>
            <person name="Ecker J.R."/>
        </authorList>
    </citation>
    <scope>NUCLEOTIDE SEQUENCE [LARGE SCALE MRNA]</scope>
    <source>
        <strain>cv. Columbia</strain>
    </source>
</reference>
<reference key="4">
    <citation type="submission" date="2002-03" db="EMBL/GenBank/DDBJ databases">
        <title>Full-length cDNA from Arabidopsis thaliana.</title>
        <authorList>
            <person name="Brover V.V."/>
            <person name="Troukhan M.E."/>
            <person name="Alexandrov N.A."/>
            <person name="Lu Y.-P."/>
            <person name="Flavell R.B."/>
            <person name="Feldmann K.A."/>
        </authorList>
    </citation>
    <scope>NUCLEOTIDE SEQUENCE [LARGE SCALE MRNA]</scope>
</reference>
<reference key="5">
    <citation type="journal article" date="2009" name="Plant Physiol.">
        <title>Large-scale Arabidopsis phosphoproteome profiling reveals novel chloroplast kinase substrates and phosphorylation networks.</title>
        <authorList>
            <person name="Reiland S."/>
            <person name="Messerli G."/>
            <person name="Baerenfaller K."/>
            <person name="Gerrits B."/>
            <person name="Endler A."/>
            <person name="Grossmann J."/>
            <person name="Gruissem W."/>
            <person name="Baginsky S."/>
        </authorList>
    </citation>
    <scope>IDENTIFICATION BY MASS SPECTROMETRY [LARGE SCALE ANALYSIS]</scope>
</reference>
<reference key="6">
    <citation type="journal article" date="2017" name="FEBS Lett.">
        <title>Functional identification of AtAVT3, a family of vacuolar amino acid transporters, in Arabidopsis.</title>
        <authorList>
            <person name="Fujiki Y."/>
            <person name="Teshima H."/>
            <person name="Kashiwao S."/>
            <person name="Kawano-Kawada M."/>
            <person name="Ohsumi Y."/>
            <person name="Kakinuma Y."/>
            <person name="Sekito T."/>
        </authorList>
    </citation>
    <scope>GENE FAMILY</scope>
    <scope>NOMENCLATURE</scope>
    <scope>SUBCELLULAR LOCATION</scope>
    <scope>FUNCTION</scope>
    <scope>TISSUE SPECIFICITY</scope>
</reference>
<organism>
    <name type="scientific">Arabidopsis thaliana</name>
    <name type="common">Mouse-ear cress</name>
    <dbReference type="NCBI Taxonomy" id="3702"/>
    <lineage>
        <taxon>Eukaryota</taxon>
        <taxon>Viridiplantae</taxon>
        <taxon>Streptophyta</taxon>
        <taxon>Embryophyta</taxon>
        <taxon>Tracheophyta</taxon>
        <taxon>Spermatophyta</taxon>
        <taxon>Magnoliopsida</taxon>
        <taxon>eudicotyledons</taxon>
        <taxon>Gunneridae</taxon>
        <taxon>Pentapetalae</taxon>
        <taxon>rosids</taxon>
        <taxon>malvids</taxon>
        <taxon>Brassicales</taxon>
        <taxon>Brassicaceae</taxon>
        <taxon>Camelineae</taxon>
        <taxon>Arabidopsis</taxon>
    </lineage>
</organism>
<proteinExistence type="evidence at protein level"/>
<gene>
    <name evidence="4" type="primary">AVT3C</name>
    <name evidence="6" type="ordered locus">At4g38250</name>
    <name evidence="7" type="ORF">F22I13.20</name>
</gene>
<keyword id="KW-0029">Amino-acid transport</keyword>
<keyword id="KW-0472">Membrane</keyword>
<keyword id="KW-1185">Reference proteome</keyword>
<keyword id="KW-0812">Transmembrane</keyword>
<keyword id="KW-1133">Transmembrane helix</keyword>
<keyword id="KW-0813">Transport</keyword>
<keyword id="KW-0926">Vacuole</keyword>
<name>AVT3C_ARATH</name>
<comment type="function">
    <text evidence="3">Translocates preferentially neutral amino acids from the vacuole to the cytoplasm.</text>
</comment>
<comment type="subcellular location">
    <subcellularLocation>
        <location evidence="3">Vacuole membrane</location>
        <topology evidence="1">Multi-pass membrane protein</topology>
    </subcellularLocation>
</comment>
<comment type="tissue specificity">
    <text evidence="3">Ubiquitous.</text>
</comment>
<comment type="similarity">
    <text evidence="5">Belongs to the amino acid/polyamine transporter 2 family. Amino acid/auxin permease (AAAP) (TC 2.A.18.8) subfamily.</text>
</comment>
<evidence type="ECO:0000255" key="1"/>
<evidence type="ECO:0000256" key="2">
    <source>
        <dbReference type="SAM" id="MobiDB-lite"/>
    </source>
</evidence>
<evidence type="ECO:0000269" key="3">
    <source>
    </source>
</evidence>
<evidence type="ECO:0000303" key="4">
    <source>
    </source>
</evidence>
<evidence type="ECO:0000305" key="5"/>
<evidence type="ECO:0000312" key="6">
    <source>
        <dbReference type="Araport" id="AT4G38250"/>
    </source>
</evidence>
<evidence type="ECO:0000312" key="7">
    <source>
        <dbReference type="EMBL" id="CAB37481.1"/>
    </source>
</evidence>